<gene>
    <name evidence="1" type="primary">lutA</name>
    <name type="ordered locus">OB0370</name>
</gene>
<accession>Q8ET92</accession>
<feature type="chain" id="PRO_0000384053" description="Lactate utilization protein A">
    <location>
        <begin position="1"/>
        <end position="244"/>
    </location>
</feature>
<keyword id="KW-1185">Reference proteome</keyword>
<name>LUTA_OCEIH</name>
<organism>
    <name type="scientific">Oceanobacillus iheyensis (strain DSM 14371 / CIP 107618 / JCM 11309 / KCTC 3954 / HTE831)</name>
    <dbReference type="NCBI Taxonomy" id="221109"/>
    <lineage>
        <taxon>Bacteria</taxon>
        <taxon>Bacillati</taxon>
        <taxon>Bacillota</taxon>
        <taxon>Bacilli</taxon>
        <taxon>Bacillales</taxon>
        <taxon>Bacillaceae</taxon>
        <taxon>Oceanobacillus</taxon>
    </lineage>
</organism>
<protein>
    <recommendedName>
        <fullName evidence="1">Lactate utilization protein A</fullName>
    </recommendedName>
</protein>
<evidence type="ECO:0000255" key="1">
    <source>
        <dbReference type="HAMAP-Rule" id="MF_02105"/>
    </source>
</evidence>
<proteinExistence type="inferred from homology"/>
<comment type="function">
    <text evidence="1">Is involved in L-lactate degradation and allows cells to grow with lactate as the sole carbon source.</text>
</comment>
<comment type="similarity">
    <text evidence="1">Belongs to the LutA/YkgE family.</text>
</comment>
<dbReference type="EMBL" id="BA000028">
    <property type="protein sequence ID" value="BAC12326.1"/>
    <property type="molecule type" value="Genomic_DNA"/>
</dbReference>
<dbReference type="RefSeq" id="WP_011064775.1">
    <property type="nucleotide sequence ID" value="NC_004193.1"/>
</dbReference>
<dbReference type="SMR" id="Q8ET92"/>
<dbReference type="STRING" id="221109.gene:10732573"/>
<dbReference type="KEGG" id="oih:OB0370"/>
<dbReference type="eggNOG" id="COG0247">
    <property type="taxonomic scope" value="Bacteria"/>
</dbReference>
<dbReference type="HOGENOM" id="CLU_023081_1_0_9"/>
<dbReference type="OrthoDB" id="9770306at2"/>
<dbReference type="PhylomeDB" id="Q8ET92"/>
<dbReference type="Proteomes" id="UP000000822">
    <property type="component" value="Chromosome"/>
</dbReference>
<dbReference type="GO" id="GO:0005829">
    <property type="term" value="C:cytosol"/>
    <property type="evidence" value="ECO:0007669"/>
    <property type="project" value="TreeGrafter"/>
</dbReference>
<dbReference type="GO" id="GO:0016491">
    <property type="term" value="F:oxidoreductase activity"/>
    <property type="evidence" value="ECO:0007669"/>
    <property type="project" value="UniProtKB-ARBA"/>
</dbReference>
<dbReference type="GO" id="GO:0006089">
    <property type="term" value="P:lactate metabolic process"/>
    <property type="evidence" value="ECO:0007669"/>
    <property type="project" value="UniProtKB-UniRule"/>
</dbReference>
<dbReference type="HAMAP" id="MF_02105">
    <property type="entry name" value="LutA"/>
    <property type="match status" value="1"/>
</dbReference>
<dbReference type="InterPro" id="IPR004017">
    <property type="entry name" value="Cys_rich_dom"/>
</dbReference>
<dbReference type="InterPro" id="IPR022822">
    <property type="entry name" value="LutA"/>
</dbReference>
<dbReference type="PANTHER" id="PTHR30296:SF0">
    <property type="entry name" value="LACTATE UTILIZATION PROTEIN A"/>
    <property type="match status" value="1"/>
</dbReference>
<dbReference type="PANTHER" id="PTHR30296">
    <property type="entry name" value="UNCHARACTERIZED PROTEIN YKGE"/>
    <property type="match status" value="1"/>
</dbReference>
<dbReference type="Pfam" id="PF02754">
    <property type="entry name" value="CCG"/>
    <property type="match status" value="2"/>
</dbReference>
<reference key="1">
    <citation type="journal article" date="2002" name="Nucleic Acids Res.">
        <title>Genome sequence of Oceanobacillus iheyensis isolated from the Iheya Ridge and its unexpected adaptive capabilities to extreme environments.</title>
        <authorList>
            <person name="Takami H."/>
            <person name="Takaki Y."/>
            <person name="Uchiyama I."/>
        </authorList>
    </citation>
    <scope>NUCLEOTIDE SEQUENCE [LARGE SCALE GENOMIC DNA]</scope>
    <source>
        <strain>DSM 14371 / CIP 107618 / JCM 11309 / KCTC 3954 / HTE831</strain>
    </source>
</reference>
<sequence>MKVSLFITCVSDIVFADVGKHTVEILERVGCEVDFPAAQTCCGQPAYNSGYLQEAKKSMKQMIKAFKNSEYVVGPSGSCVGMLKEYPHIFKGDPDWEQPAIDLANKSYEITQFLVDVLGVTDLGSTFKGRVTYHPSCHMTRVLGVKDAPQKLLQSVKGIDFVELPVKEDCCGFGGTFSIKNPEISREMVKEKSQHVSETKAEYLVGGDMGCLMNIGGRMRREGKDVKVVHITEILNTHREGGIA</sequence>